<sequence>MATDIATKELHKPVDVAEYLFRRLYEVGVRAVHGVPGDYNLAALDYLPKCGLHWVGNCNELNAGYAADGYARINGISALVTTFGVGELSALNAIAGAYSEFVPIVHIVGQPHTRSQRDGMLLHHTLGNGDFNVFAKMSGGISCAMGRLNETHEVATLIDNAIRECWLRSRPVYIGLPTDIIVKKIEGQRLDTPLDLSLPPNDPEKEDYVVDVVLKYLHAAKNPVILVDACAIRHRVLDEVHDLMETSGLPTFVAPMGKGAVDETRKNYGGVYAGTGSNPGVREQVESSDLILSIGAIKSDFNTTGFSYRIGQLNTIDFHSTYVRVRYSEYPDINMKGVLRKVVQRMGHVNALPVQRLSNALPDNEKGSSSQEITHAWLWPIVGQWLKERDIVITETGTANFGIWDTRFPANVTAISQVLWGSIGYSVGACQGAALAAKEQNNRRTVLFVGDGSLQLTVQEISTMIRNNLNPIVFVICNQGYTIERFIHGWDEAYNDIQPWDIKGLPVVFGAKDKYKGYRVKTRDELTKLFANDEFNSVPCLQLVELHMPRDDAPASLKLTAESAAHRNA</sequence>
<dbReference type="EC" id="4.1.1.1"/>
<dbReference type="EMBL" id="CH476599">
    <property type="protein sequence ID" value="EAU35080.1"/>
    <property type="molecule type" value="Genomic_DNA"/>
</dbReference>
<dbReference type="RefSeq" id="XP_001213811.1">
    <property type="nucleotide sequence ID" value="XM_001213811.1"/>
</dbReference>
<dbReference type="SMR" id="Q0CNV1"/>
<dbReference type="STRING" id="341663.Q0CNV1"/>
<dbReference type="EnsemblFungi" id="EAU35080">
    <property type="protein sequence ID" value="EAU35080"/>
    <property type="gene ID" value="ATEG_04633"/>
</dbReference>
<dbReference type="GeneID" id="4320296"/>
<dbReference type="VEuPathDB" id="FungiDB:ATEG_04633"/>
<dbReference type="eggNOG" id="KOG1184">
    <property type="taxonomic scope" value="Eukaryota"/>
</dbReference>
<dbReference type="HOGENOM" id="CLU_013748_0_2_1"/>
<dbReference type="OMA" id="IHGPEQR"/>
<dbReference type="OrthoDB" id="3970464at2759"/>
<dbReference type="Proteomes" id="UP000007963">
    <property type="component" value="Unassembled WGS sequence"/>
</dbReference>
<dbReference type="GO" id="GO:0005829">
    <property type="term" value="C:cytosol"/>
    <property type="evidence" value="ECO:0007669"/>
    <property type="project" value="TreeGrafter"/>
</dbReference>
<dbReference type="GO" id="GO:0005634">
    <property type="term" value="C:nucleus"/>
    <property type="evidence" value="ECO:0007669"/>
    <property type="project" value="TreeGrafter"/>
</dbReference>
<dbReference type="GO" id="GO:0000287">
    <property type="term" value="F:magnesium ion binding"/>
    <property type="evidence" value="ECO:0007669"/>
    <property type="project" value="InterPro"/>
</dbReference>
<dbReference type="GO" id="GO:0004737">
    <property type="term" value="F:pyruvate decarboxylase activity"/>
    <property type="evidence" value="ECO:0007669"/>
    <property type="project" value="UniProtKB-EC"/>
</dbReference>
<dbReference type="GO" id="GO:0030976">
    <property type="term" value="F:thiamine pyrophosphate binding"/>
    <property type="evidence" value="ECO:0007669"/>
    <property type="project" value="InterPro"/>
</dbReference>
<dbReference type="GO" id="GO:0000949">
    <property type="term" value="P:aromatic amino acid family catabolic process to alcohol via Ehrlich pathway"/>
    <property type="evidence" value="ECO:0007669"/>
    <property type="project" value="TreeGrafter"/>
</dbReference>
<dbReference type="CDD" id="cd02005">
    <property type="entry name" value="TPP_PDC_IPDC"/>
    <property type="match status" value="1"/>
</dbReference>
<dbReference type="CDD" id="cd07038">
    <property type="entry name" value="TPP_PYR_PDC_IPDC_like"/>
    <property type="match status" value="1"/>
</dbReference>
<dbReference type="FunFam" id="3.40.50.1220:FF:000025">
    <property type="entry name" value="Pyruvate decarboxylase"/>
    <property type="match status" value="1"/>
</dbReference>
<dbReference type="FunFam" id="3.40.50.970:FF:000019">
    <property type="entry name" value="Pyruvate decarboxylase isozyme"/>
    <property type="match status" value="1"/>
</dbReference>
<dbReference type="FunFam" id="3.40.50.970:FF:000024">
    <property type="entry name" value="Pyruvate decarboxylase isozyme"/>
    <property type="match status" value="1"/>
</dbReference>
<dbReference type="Gene3D" id="3.40.50.970">
    <property type="match status" value="2"/>
</dbReference>
<dbReference type="Gene3D" id="3.40.50.1220">
    <property type="entry name" value="TPP-binding domain"/>
    <property type="match status" value="1"/>
</dbReference>
<dbReference type="InterPro" id="IPR029035">
    <property type="entry name" value="DHS-like_NAD/FAD-binding_dom"/>
</dbReference>
<dbReference type="InterPro" id="IPR012110">
    <property type="entry name" value="PDC/IPDC-like"/>
</dbReference>
<dbReference type="InterPro" id="IPR029061">
    <property type="entry name" value="THDP-binding"/>
</dbReference>
<dbReference type="InterPro" id="IPR012000">
    <property type="entry name" value="Thiamin_PyroP_enz_cen_dom"/>
</dbReference>
<dbReference type="InterPro" id="IPR012001">
    <property type="entry name" value="Thiamin_PyroP_enz_TPP-bd_dom"/>
</dbReference>
<dbReference type="InterPro" id="IPR011766">
    <property type="entry name" value="TPP_enzyme_TPP-bd"/>
</dbReference>
<dbReference type="InterPro" id="IPR047214">
    <property type="entry name" value="TPP_PDC_IPDC"/>
</dbReference>
<dbReference type="InterPro" id="IPR047213">
    <property type="entry name" value="TPP_PYR_PDC_IPDC-like"/>
</dbReference>
<dbReference type="PANTHER" id="PTHR43452">
    <property type="entry name" value="PYRUVATE DECARBOXYLASE"/>
    <property type="match status" value="1"/>
</dbReference>
<dbReference type="PANTHER" id="PTHR43452:SF30">
    <property type="entry name" value="PYRUVATE DECARBOXYLASE ISOZYME 1-RELATED"/>
    <property type="match status" value="1"/>
</dbReference>
<dbReference type="Pfam" id="PF02775">
    <property type="entry name" value="TPP_enzyme_C"/>
    <property type="match status" value="1"/>
</dbReference>
<dbReference type="Pfam" id="PF00205">
    <property type="entry name" value="TPP_enzyme_M"/>
    <property type="match status" value="1"/>
</dbReference>
<dbReference type="Pfam" id="PF02776">
    <property type="entry name" value="TPP_enzyme_N"/>
    <property type="match status" value="1"/>
</dbReference>
<dbReference type="PIRSF" id="PIRSF036565">
    <property type="entry name" value="Pyruvt_ip_decrb"/>
    <property type="match status" value="1"/>
</dbReference>
<dbReference type="SUPFAM" id="SSF52467">
    <property type="entry name" value="DHS-like NAD/FAD-binding domain"/>
    <property type="match status" value="1"/>
</dbReference>
<dbReference type="SUPFAM" id="SSF52518">
    <property type="entry name" value="Thiamin diphosphate-binding fold (THDP-binding)"/>
    <property type="match status" value="2"/>
</dbReference>
<proteinExistence type="inferred from homology"/>
<feature type="chain" id="PRO_0000286159" description="Pyruvate decarboxylase">
    <location>
        <begin position="1"/>
        <end position="569"/>
    </location>
</feature>
<feature type="binding site" evidence="2">
    <location>
        <position position="38"/>
    </location>
    <ligand>
        <name>pyruvate</name>
        <dbReference type="ChEBI" id="CHEBI:15361"/>
        <note>ligand shared between two neighboring subunits</note>
    </ligand>
</feature>
<feature type="binding site" evidence="2">
    <location>
        <position position="124"/>
    </location>
    <ligand>
        <name>pyruvate</name>
        <dbReference type="ChEBI" id="CHEBI:15361"/>
        <note>ligand shared between two neighboring subunits</note>
    </ligand>
</feature>
<feature type="binding site" evidence="2">
    <location>
        <position position="398"/>
    </location>
    <ligand>
        <name>thiamine diphosphate</name>
        <dbReference type="ChEBI" id="CHEBI:58937"/>
    </ligand>
</feature>
<feature type="binding site" evidence="2">
    <location>
        <begin position="421"/>
        <end position="423"/>
    </location>
    <ligand>
        <name>thiamine diphosphate</name>
        <dbReference type="ChEBI" id="CHEBI:58937"/>
    </ligand>
</feature>
<feature type="binding site" evidence="2">
    <location>
        <position position="451"/>
    </location>
    <ligand>
        <name>Mg(2+)</name>
        <dbReference type="ChEBI" id="CHEBI:18420"/>
    </ligand>
</feature>
<feature type="binding site" evidence="2">
    <location>
        <begin position="452"/>
        <end position="453"/>
    </location>
    <ligand>
        <name>thiamine diphosphate</name>
        <dbReference type="ChEBI" id="CHEBI:58937"/>
    </ligand>
</feature>
<feature type="binding site" evidence="2">
    <location>
        <begin position="478"/>
        <end position="483"/>
    </location>
    <ligand>
        <name>thiamine diphosphate</name>
        <dbReference type="ChEBI" id="CHEBI:58937"/>
    </ligand>
</feature>
<feature type="binding site" evidence="2">
    <location>
        <position position="478"/>
    </location>
    <ligand>
        <name>Mg(2+)</name>
        <dbReference type="ChEBI" id="CHEBI:18420"/>
    </ligand>
</feature>
<feature type="binding site" evidence="2">
    <location>
        <position position="480"/>
    </location>
    <ligand>
        <name>Mg(2+)</name>
        <dbReference type="ChEBI" id="CHEBI:18420"/>
    </ligand>
</feature>
<feature type="binding site" evidence="2">
    <location>
        <position position="484"/>
    </location>
    <ligand>
        <name>pyruvate</name>
        <dbReference type="ChEBI" id="CHEBI:15361"/>
        <note>ligand shared between two neighboring subunits</note>
    </ligand>
</feature>
<gene>
    <name type="primary">pdcA</name>
    <name type="ORF">ATEG_04633</name>
</gene>
<comment type="catalytic activity">
    <reaction>
        <text>a 2-oxocarboxylate + H(+) = an aldehyde + CO2</text>
        <dbReference type="Rhea" id="RHEA:11628"/>
        <dbReference type="ChEBI" id="CHEBI:15378"/>
        <dbReference type="ChEBI" id="CHEBI:16526"/>
        <dbReference type="ChEBI" id="CHEBI:17478"/>
        <dbReference type="ChEBI" id="CHEBI:35179"/>
        <dbReference type="EC" id="4.1.1.1"/>
    </reaction>
</comment>
<comment type="catalytic activity">
    <reaction evidence="2">
        <text>pyruvate + H(+) = acetaldehyde + CO2</text>
        <dbReference type="Rhea" id="RHEA:45484"/>
        <dbReference type="ChEBI" id="CHEBI:15343"/>
        <dbReference type="ChEBI" id="CHEBI:15361"/>
        <dbReference type="ChEBI" id="CHEBI:15378"/>
        <dbReference type="ChEBI" id="CHEBI:16526"/>
    </reaction>
</comment>
<comment type="cofactor">
    <cofactor evidence="2">
        <name>Mg(2+)</name>
        <dbReference type="ChEBI" id="CHEBI:18420"/>
    </cofactor>
    <text evidence="2">Binds 1 Mg(2+) per subunit.</text>
</comment>
<comment type="cofactor">
    <cofactor evidence="2">
        <name>thiamine diphosphate</name>
        <dbReference type="ChEBI" id="CHEBI:58937"/>
    </cofactor>
    <text evidence="2">Binds 1 thiamine pyrophosphate per subunit.</text>
</comment>
<comment type="subunit">
    <text evidence="1">Homotetramer.</text>
</comment>
<comment type="similarity">
    <text evidence="3">Belongs to the TPP enzyme family.</text>
</comment>
<accession>Q0CNV1</accession>
<keyword id="KW-0210">Decarboxylase</keyword>
<keyword id="KW-0456">Lyase</keyword>
<keyword id="KW-0460">Magnesium</keyword>
<keyword id="KW-0479">Metal-binding</keyword>
<keyword id="KW-1185">Reference proteome</keyword>
<keyword id="KW-0786">Thiamine pyrophosphate</keyword>
<protein>
    <recommendedName>
        <fullName>Pyruvate decarboxylase</fullName>
        <ecNumber>4.1.1.1</ecNumber>
    </recommendedName>
</protein>
<organism>
    <name type="scientific">Aspergillus terreus (strain NIH 2624 / FGSC A1156)</name>
    <dbReference type="NCBI Taxonomy" id="341663"/>
    <lineage>
        <taxon>Eukaryota</taxon>
        <taxon>Fungi</taxon>
        <taxon>Dikarya</taxon>
        <taxon>Ascomycota</taxon>
        <taxon>Pezizomycotina</taxon>
        <taxon>Eurotiomycetes</taxon>
        <taxon>Eurotiomycetidae</taxon>
        <taxon>Eurotiales</taxon>
        <taxon>Aspergillaceae</taxon>
        <taxon>Aspergillus</taxon>
        <taxon>Aspergillus subgen. Circumdati</taxon>
    </lineage>
</organism>
<name>PDC_ASPTN</name>
<reference key="1">
    <citation type="submission" date="2005-09" db="EMBL/GenBank/DDBJ databases">
        <title>Annotation of the Aspergillus terreus NIH2624 genome.</title>
        <authorList>
            <person name="Birren B.W."/>
            <person name="Lander E.S."/>
            <person name="Galagan J.E."/>
            <person name="Nusbaum C."/>
            <person name="Devon K."/>
            <person name="Henn M."/>
            <person name="Ma L.-J."/>
            <person name="Jaffe D.B."/>
            <person name="Butler J."/>
            <person name="Alvarez P."/>
            <person name="Gnerre S."/>
            <person name="Grabherr M."/>
            <person name="Kleber M."/>
            <person name="Mauceli E.W."/>
            <person name="Brockman W."/>
            <person name="Rounsley S."/>
            <person name="Young S.K."/>
            <person name="LaButti K."/>
            <person name="Pushparaj V."/>
            <person name="DeCaprio D."/>
            <person name="Crawford M."/>
            <person name="Koehrsen M."/>
            <person name="Engels R."/>
            <person name="Montgomery P."/>
            <person name="Pearson M."/>
            <person name="Howarth C."/>
            <person name="Larson L."/>
            <person name="Luoma S."/>
            <person name="White J."/>
            <person name="Alvarado L."/>
            <person name="Kodira C.D."/>
            <person name="Zeng Q."/>
            <person name="Oleary S."/>
            <person name="Yandava C."/>
            <person name="Denning D.W."/>
            <person name="Nierman W.C."/>
            <person name="Milne T."/>
            <person name="Madden K."/>
        </authorList>
    </citation>
    <scope>NUCLEOTIDE SEQUENCE [LARGE SCALE GENOMIC DNA]</scope>
    <source>
        <strain>NIH 2624 / FGSC A1156</strain>
    </source>
</reference>
<evidence type="ECO:0000250" key="1"/>
<evidence type="ECO:0000250" key="2">
    <source>
        <dbReference type="UniProtKB" id="P06169"/>
    </source>
</evidence>
<evidence type="ECO:0000305" key="3"/>